<name>RUVB_STRZT</name>
<dbReference type="EC" id="3.6.4.-" evidence="1"/>
<dbReference type="EMBL" id="CP000921">
    <property type="protein sequence ID" value="ACO22496.1"/>
    <property type="molecule type" value="Genomic_DNA"/>
</dbReference>
<dbReference type="RefSeq" id="WP_001809468.1">
    <property type="nucleotide sequence ID" value="NC_012469.1"/>
</dbReference>
<dbReference type="SMR" id="C1CPD4"/>
<dbReference type="GeneID" id="45652263"/>
<dbReference type="KEGG" id="snt:SPT_0306"/>
<dbReference type="HOGENOM" id="CLU_055599_1_0_9"/>
<dbReference type="GO" id="GO:0005737">
    <property type="term" value="C:cytoplasm"/>
    <property type="evidence" value="ECO:0007669"/>
    <property type="project" value="UniProtKB-SubCell"/>
</dbReference>
<dbReference type="GO" id="GO:0048476">
    <property type="term" value="C:Holliday junction resolvase complex"/>
    <property type="evidence" value="ECO:0007669"/>
    <property type="project" value="UniProtKB-UniRule"/>
</dbReference>
<dbReference type="GO" id="GO:0005524">
    <property type="term" value="F:ATP binding"/>
    <property type="evidence" value="ECO:0007669"/>
    <property type="project" value="UniProtKB-UniRule"/>
</dbReference>
<dbReference type="GO" id="GO:0016887">
    <property type="term" value="F:ATP hydrolysis activity"/>
    <property type="evidence" value="ECO:0007669"/>
    <property type="project" value="InterPro"/>
</dbReference>
<dbReference type="GO" id="GO:0000400">
    <property type="term" value="F:four-way junction DNA binding"/>
    <property type="evidence" value="ECO:0007669"/>
    <property type="project" value="UniProtKB-UniRule"/>
</dbReference>
<dbReference type="GO" id="GO:0009378">
    <property type="term" value="F:four-way junction helicase activity"/>
    <property type="evidence" value="ECO:0007669"/>
    <property type="project" value="InterPro"/>
</dbReference>
<dbReference type="GO" id="GO:0006310">
    <property type="term" value="P:DNA recombination"/>
    <property type="evidence" value="ECO:0007669"/>
    <property type="project" value="UniProtKB-UniRule"/>
</dbReference>
<dbReference type="GO" id="GO:0006281">
    <property type="term" value="P:DNA repair"/>
    <property type="evidence" value="ECO:0007669"/>
    <property type="project" value="UniProtKB-UniRule"/>
</dbReference>
<dbReference type="CDD" id="cd00009">
    <property type="entry name" value="AAA"/>
    <property type="match status" value="1"/>
</dbReference>
<dbReference type="Gene3D" id="1.10.8.60">
    <property type="match status" value="1"/>
</dbReference>
<dbReference type="Gene3D" id="3.40.50.300">
    <property type="entry name" value="P-loop containing nucleotide triphosphate hydrolases"/>
    <property type="match status" value="1"/>
</dbReference>
<dbReference type="Gene3D" id="1.10.10.10">
    <property type="entry name" value="Winged helix-like DNA-binding domain superfamily/Winged helix DNA-binding domain"/>
    <property type="match status" value="1"/>
</dbReference>
<dbReference type="HAMAP" id="MF_00016">
    <property type="entry name" value="DNA_HJ_migration_RuvB"/>
    <property type="match status" value="1"/>
</dbReference>
<dbReference type="InterPro" id="IPR003593">
    <property type="entry name" value="AAA+_ATPase"/>
</dbReference>
<dbReference type="InterPro" id="IPR041445">
    <property type="entry name" value="AAA_lid_4"/>
</dbReference>
<dbReference type="InterPro" id="IPR004605">
    <property type="entry name" value="DNA_helicase_Holl-junc_RuvB"/>
</dbReference>
<dbReference type="InterPro" id="IPR027417">
    <property type="entry name" value="P-loop_NTPase"/>
</dbReference>
<dbReference type="InterPro" id="IPR008824">
    <property type="entry name" value="RuvB-like_N"/>
</dbReference>
<dbReference type="InterPro" id="IPR008823">
    <property type="entry name" value="RuvB_C"/>
</dbReference>
<dbReference type="InterPro" id="IPR036388">
    <property type="entry name" value="WH-like_DNA-bd_sf"/>
</dbReference>
<dbReference type="InterPro" id="IPR036390">
    <property type="entry name" value="WH_DNA-bd_sf"/>
</dbReference>
<dbReference type="NCBIfam" id="NF000868">
    <property type="entry name" value="PRK00080.1"/>
    <property type="match status" value="1"/>
</dbReference>
<dbReference type="NCBIfam" id="TIGR00635">
    <property type="entry name" value="ruvB"/>
    <property type="match status" value="1"/>
</dbReference>
<dbReference type="PANTHER" id="PTHR42848">
    <property type="match status" value="1"/>
</dbReference>
<dbReference type="PANTHER" id="PTHR42848:SF1">
    <property type="entry name" value="HOLLIDAY JUNCTION BRANCH MIGRATION COMPLEX SUBUNIT RUVB"/>
    <property type="match status" value="1"/>
</dbReference>
<dbReference type="Pfam" id="PF17864">
    <property type="entry name" value="AAA_lid_4"/>
    <property type="match status" value="1"/>
</dbReference>
<dbReference type="Pfam" id="PF05491">
    <property type="entry name" value="RuvB_C"/>
    <property type="match status" value="1"/>
</dbReference>
<dbReference type="Pfam" id="PF05496">
    <property type="entry name" value="RuvB_N"/>
    <property type="match status" value="1"/>
</dbReference>
<dbReference type="SMART" id="SM00382">
    <property type="entry name" value="AAA"/>
    <property type="match status" value="1"/>
</dbReference>
<dbReference type="SUPFAM" id="SSF52540">
    <property type="entry name" value="P-loop containing nucleoside triphosphate hydrolases"/>
    <property type="match status" value="1"/>
</dbReference>
<dbReference type="SUPFAM" id="SSF46785">
    <property type="entry name" value="Winged helix' DNA-binding domain"/>
    <property type="match status" value="1"/>
</dbReference>
<proteinExistence type="inferred from homology"/>
<organism>
    <name type="scientific">Streptococcus pneumoniae (strain Taiwan19F-14)</name>
    <dbReference type="NCBI Taxonomy" id="487213"/>
    <lineage>
        <taxon>Bacteria</taxon>
        <taxon>Bacillati</taxon>
        <taxon>Bacillota</taxon>
        <taxon>Bacilli</taxon>
        <taxon>Lactobacillales</taxon>
        <taxon>Streptococcaceae</taxon>
        <taxon>Streptococcus</taxon>
    </lineage>
</organism>
<comment type="function">
    <text evidence="1">The RuvA-RuvB-RuvC complex processes Holliday junction (HJ) DNA during genetic recombination and DNA repair, while the RuvA-RuvB complex plays an important role in the rescue of blocked DNA replication forks via replication fork reversal (RFR). RuvA specifically binds to HJ cruciform DNA, conferring on it an open structure. The RuvB hexamer acts as an ATP-dependent pump, pulling dsDNA into and through the RuvAB complex. RuvB forms 2 homohexamers on either side of HJ DNA bound by 1 or 2 RuvA tetramers; 4 subunits per hexamer contact DNA at a time. Coordinated motions by a converter formed by DNA-disengaged RuvB subunits stimulates ATP hydrolysis and nucleotide exchange. Immobilization of the converter enables RuvB to convert the ATP-contained energy into a lever motion, pulling 2 nucleotides of DNA out of the RuvA tetramer per ATP hydrolyzed, thus driving DNA branch migration. The RuvB motors rotate together with the DNA substrate, which together with the progressing nucleotide cycle form the mechanistic basis for DNA recombination by continuous HJ branch migration. Branch migration allows RuvC to scan DNA until it finds its consensus sequence, where it cleaves and resolves cruciform DNA.</text>
</comment>
<comment type="catalytic activity">
    <reaction evidence="1">
        <text>ATP + H2O = ADP + phosphate + H(+)</text>
        <dbReference type="Rhea" id="RHEA:13065"/>
        <dbReference type="ChEBI" id="CHEBI:15377"/>
        <dbReference type="ChEBI" id="CHEBI:15378"/>
        <dbReference type="ChEBI" id="CHEBI:30616"/>
        <dbReference type="ChEBI" id="CHEBI:43474"/>
        <dbReference type="ChEBI" id="CHEBI:456216"/>
    </reaction>
</comment>
<comment type="subunit">
    <text evidence="1">Homohexamer. Forms an RuvA(8)-RuvB(12)-Holliday junction (HJ) complex. HJ DNA is sandwiched between 2 RuvA tetramers; dsDNA enters through RuvA and exits via RuvB. An RuvB hexamer assembles on each DNA strand where it exits the tetramer. Each RuvB hexamer is contacted by two RuvA subunits (via domain III) on 2 adjacent RuvB subunits; this complex drives branch migration. In the full resolvosome a probable DNA-RuvA(4)-RuvB(12)-RuvC(2) complex forms which resolves the HJ.</text>
</comment>
<comment type="subcellular location">
    <subcellularLocation>
        <location evidence="1">Cytoplasm</location>
    </subcellularLocation>
</comment>
<comment type="domain">
    <text evidence="1">Has 3 domains, the large (RuvB-L) and small ATPase (RuvB-S) domains and the C-terminal head (RuvB-H) domain. The head domain binds DNA, while the ATPase domains jointly bind ATP, ADP or are empty depending on the state of the subunit in the translocation cycle. During a single DNA translocation step the structure of each domain remains the same, but their relative positions change.</text>
</comment>
<comment type="similarity">
    <text evidence="1">Belongs to the RuvB family.</text>
</comment>
<sequence>MSRILDNEIMGDEELVERTLRPQYLREYIGQDKVKDQLQIFIEAAKMRDEALDHVLLFGPPGLGKTTMAFVIANELGVNLKQTSGPVIEKAGDLVAILNELEPGDVLFIDEIHRLPMSVEEVLYSAMEDFYIDIMIGAGEGSRSVHLELPPFTLIGATTRAGMLSNPLRARFGITGHMEYYAHADLTEIVERTADIFEMEITHEAASELALRSRGTPRIANRLLKRVRDFAQIMGNGVIDDIITDKALTMLDVDHEGLDYVDQKILRTMIEMYSGGPVGLGTLSVNIAEERETVEDMYEPYLIQKGFIMRTRSGRVATAKAYEHLGYEYSEK</sequence>
<keyword id="KW-0067">ATP-binding</keyword>
<keyword id="KW-0963">Cytoplasm</keyword>
<keyword id="KW-0227">DNA damage</keyword>
<keyword id="KW-0233">DNA recombination</keyword>
<keyword id="KW-0234">DNA repair</keyword>
<keyword id="KW-0238">DNA-binding</keyword>
<keyword id="KW-0378">Hydrolase</keyword>
<keyword id="KW-0547">Nucleotide-binding</keyword>
<accession>C1CPD4</accession>
<protein>
    <recommendedName>
        <fullName evidence="1">Holliday junction branch migration complex subunit RuvB</fullName>
        <ecNumber evidence="1">3.6.4.-</ecNumber>
    </recommendedName>
</protein>
<evidence type="ECO:0000255" key="1">
    <source>
        <dbReference type="HAMAP-Rule" id="MF_00016"/>
    </source>
</evidence>
<reference key="1">
    <citation type="journal article" date="2010" name="Genome Biol.">
        <title>Structure and dynamics of the pan-genome of Streptococcus pneumoniae and closely related species.</title>
        <authorList>
            <person name="Donati C."/>
            <person name="Hiller N.L."/>
            <person name="Tettelin H."/>
            <person name="Muzzi A."/>
            <person name="Croucher N.J."/>
            <person name="Angiuoli S.V."/>
            <person name="Oggioni M."/>
            <person name="Dunning Hotopp J.C."/>
            <person name="Hu F.Z."/>
            <person name="Riley D.R."/>
            <person name="Covacci A."/>
            <person name="Mitchell T.J."/>
            <person name="Bentley S.D."/>
            <person name="Kilian M."/>
            <person name="Ehrlich G.D."/>
            <person name="Rappuoli R."/>
            <person name="Moxon E.R."/>
            <person name="Masignani V."/>
        </authorList>
    </citation>
    <scope>NUCLEOTIDE SEQUENCE [LARGE SCALE GENOMIC DNA]</scope>
    <source>
        <strain>Taiwan19F-14</strain>
    </source>
</reference>
<gene>
    <name evidence="1" type="primary">ruvB</name>
    <name type="ordered locus">SPT_0306</name>
</gene>
<feature type="chain" id="PRO_1000116662" description="Holliday junction branch migration complex subunit RuvB">
    <location>
        <begin position="1"/>
        <end position="332"/>
    </location>
</feature>
<feature type="region of interest" description="Large ATPase domain (RuvB-L)" evidence="1">
    <location>
        <begin position="1"/>
        <end position="181"/>
    </location>
</feature>
<feature type="region of interest" description="Small ATPAse domain (RuvB-S)" evidence="1">
    <location>
        <begin position="182"/>
        <end position="252"/>
    </location>
</feature>
<feature type="region of interest" description="Head domain (RuvB-H)" evidence="1">
    <location>
        <begin position="255"/>
        <end position="332"/>
    </location>
</feature>
<feature type="binding site" evidence="1">
    <location>
        <position position="20"/>
    </location>
    <ligand>
        <name>ATP</name>
        <dbReference type="ChEBI" id="CHEBI:30616"/>
    </ligand>
</feature>
<feature type="binding site" evidence="1">
    <location>
        <position position="21"/>
    </location>
    <ligand>
        <name>ATP</name>
        <dbReference type="ChEBI" id="CHEBI:30616"/>
    </ligand>
</feature>
<feature type="binding site" evidence="1">
    <location>
        <position position="62"/>
    </location>
    <ligand>
        <name>ATP</name>
        <dbReference type="ChEBI" id="CHEBI:30616"/>
    </ligand>
</feature>
<feature type="binding site" evidence="1">
    <location>
        <position position="65"/>
    </location>
    <ligand>
        <name>ATP</name>
        <dbReference type="ChEBI" id="CHEBI:30616"/>
    </ligand>
</feature>
<feature type="binding site" evidence="1">
    <location>
        <position position="66"/>
    </location>
    <ligand>
        <name>ATP</name>
        <dbReference type="ChEBI" id="CHEBI:30616"/>
    </ligand>
</feature>
<feature type="binding site" evidence="1">
    <location>
        <position position="66"/>
    </location>
    <ligand>
        <name>Mg(2+)</name>
        <dbReference type="ChEBI" id="CHEBI:18420"/>
    </ligand>
</feature>
<feature type="binding site" evidence="1">
    <location>
        <position position="67"/>
    </location>
    <ligand>
        <name>ATP</name>
        <dbReference type="ChEBI" id="CHEBI:30616"/>
    </ligand>
</feature>
<feature type="binding site" evidence="1">
    <location>
        <begin position="128"/>
        <end position="130"/>
    </location>
    <ligand>
        <name>ATP</name>
        <dbReference type="ChEBI" id="CHEBI:30616"/>
    </ligand>
</feature>
<feature type="binding site" evidence="1">
    <location>
        <position position="171"/>
    </location>
    <ligand>
        <name>ATP</name>
        <dbReference type="ChEBI" id="CHEBI:30616"/>
    </ligand>
</feature>
<feature type="binding site" evidence="1">
    <location>
        <position position="181"/>
    </location>
    <ligand>
        <name>ATP</name>
        <dbReference type="ChEBI" id="CHEBI:30616"/>
    </ligand>
</feature>
<feature type="binding site" evidence="1">
    <location>
        <position position="218"/>
    </location>
    <ligand>
        <name>ATP</name>
        <dbReference type="ChEBI" id="CHEBI:30616"/>
    </ligand>
</feature>
<feature type="binding site" evidence="1">
    <location>
        <position position="291"/>
    </location>
    <ligand>
        <name>DNA</name>
        <dbReference type="ChEBI" id="CHEBI:16991"/>
    </ligand>
</feature>
<feature type="binding site" evidence="1">
    <location>
        <position position="310"/>
    </location>
    <ligand>
        <name>DNA</name>
        <dbReference type="ChEBI" id="CHEBI:16991"/>
    </ligand>
</feature>
<feature type="binding site" evidence="1">
    <location>
        <position position="312"/>
    </location>
    <ligand>
        <name>DNA</name>
        <dbReference type="ChEBI" id="CHEBI:16991"/>
    </ligand>
</feature>
<feature type="binding site" evidence="1">
    <location>
        <position position="315"/>
    </location>
    <ligand>
        <name>DNA</name>
        <dbReference type="ChEBI" id="CHEBI:16991"/>
    </ligand>
</feature>